<reference key="1">
    <citation type="submission" date="2008-01" db="EMBL/GenBank/DDBJ databases">
        <title>Complete sequence of Shewanella halifaxensis HAW-EB4.</title>
        <authorList>
            <consortium name="US DOE Joint Genome Institute"/>
            <person name="Copeland A."/>
            <person name="Lucas S."/>
            <person name="Lapidus A."/>
            <person name="Glavina del Rio T."/>
            <person name="Dalin E."/>
            <person name="Tice H."/>
            <person name="Bruce D."/>
            <person name="Goodwin L."/>
            <person name="Pitluck S."/>
            <person name="Sims D."/>
            <person name="Brettin T."/>
            <person name="Detter J.C."/>
            <person name="Han C."/>
            <person name="Kuske C.R."/>
            <person name="Schmutz J."/>
            <person name="Larimer F."/>
            <person name="Land M."/>
            <person name="Hauser L."/>
            <person name="Kyrpides N."/>
            <person name="Kim E."/>
            <person name="Zhao J.-S."/>
            <person name="Richardson P."/>
        </authorList>
    </citation>
    <scope>NUCLEOTIDE SEQUENCE [LARGE SCALE GENOMIC DNA]</scope>
    <source>
        <strain>HAW-EB4</strain>
    </source>
</reference>
<comment type="function">
    <text evidence="1">The glycine cleavage system catalyzes the degradation of glycine. The P protein binds the alpha-amino group of glycine through its pyridoxal phosphate cofactor; CO(2) is released and the remaining methylamine moiety is then transferred to the lipoamide cofactor of the H protein.</text>
</comment>
<comment type="catalytic activity">
    <reaction evidence="1">
        <text>N(6)-[(R)-lipoyl]-L-lysyl-[glycine-cleavage complex H protein] + glycine + H(+) = N(6)-[(R)-S(8)-aminomethyldihydrolipoyl]-L-lysyl-[glycine-cleavage complex H protein] + CO2</text>
        <dbReference type="Rhea" id="RHEA:24304"/>
        <dbReference type="Rhea" id="RHEA-COMP:10494"/>
        <dbReference type="Rhea" id="RHEA-COMP:10495"/>
        <dbReference type="ChEBI" id="CHEBI:15378"/>
        <dbReference type="ChEBI" id="CHEBI:16526"/>
        <dbReference type="ChEBI" id="CHEBI:57305"/>
        <dbReference type="ChEBI" id="CHEBI:83099"/>
        <dbReference type="ChEBI" id="CHEBI:83143"/>
        <dbReference type="EC" id="1.4.4.2"/>
    </reaction>
</comment>
<comment type="cofactor">
    <cofactor evidence="1">
        <name>pyridoxal 5'-phosphate</name>
        <dbReference type="ChEBI" id="CHEBI:597326"/>
    </cofactor>
</comment>
<comment type="subunit">
    <text evidence="1">The glycine cleavage system is composed of four proteins: P, T, L and H.</text>
</comment>
<comment type="similarity">
    <text evidence="1">Belongs to the GcvP family.</text>
</comment>
<proteinExistence type="inferred from homology"/>
<gene>
    <name evidence="1" type="primary">gcvP</name>
    <name type="ordered locus">Shal_3373</name>
</gene>
<protein>
    <recommendedName>
        <fullName evidence="1">Glycine dehydrogenase (decarboxylating)</fullName>
        <ecNumber evidence="1">1.4.4.2</ecNumber>
    </recommendedName>
    <alternativeName>
        <fullName evidence="1">Glycine cleavage system P-protein</fullName>
    </alternativeName>
    <alternativeName>
        <fullName evidence="1">Glycine decarboxylase</fullName>
    </alternativeName>
    <alternativeName>
        <fullName evidence="1">Glycine dehydrogenase (aminomethyl-transferring)</fullName>
    </alternativeName>
</protein>
<accession>B0TSG5</accession>
<evidence type="ECO:0000255" key="1">
    <source>
        <dbReference type="HAMAP-Rule" id="MF_00711"/>
    </source>
</evidence>
<feature type="chain" id="PRO_1000083214" description="Glycine dehydrogenase (decarboxylating)">
    <location>
        <begin position="1"/>
        <end position="966"/>
    </location>
</feature>
<feature type="modified residue" description="N6-(pyridoxal phosphate)lysine" evidence="1">
    <location>
        <position position="713"/>
    </location>
</feature>
<dbReference type="EC" id="1.4.4.2" evidence="1"/>
<dbReference type="EMBL" id="CP000931">
    <property type="protein sequence ID" value="ABZ77919.1"/>
    <property type="molecule type" value="Genomic_DNA"/>
</dbReference>
<dbReference type="RefSeq" id="WP_012278439.1">
    <property type="nucleotide sequence ID" value="NC_010334.1"/>
</dbReference>
<dbReference type="SMR" id="B0TSG5"/>
<dbReference type="STRING" id="458817.Shal_3373"/>
<dbReference type="KEGG" id="shl:Shal_3373"/>
<dbReference type="eggNOG" id="COG0403">
    <property type="taxonomic scope" value="Bacteria"/>
</dbReference>
<dbReference type="eggNOG" id="COG1003">
    <property type="taxonomic scope" value="Bacteria"/>
</dbReference>
<dbReference type="HOGENOM" id="CLU_004620_3_2_6"/>
<dbReference type="OrthoDB" id="9801272at2"/>
<dbReference type="Proteomes" id="UP000001317">
    <property type="component" value="Chromosome"/>
</dbReference>
<dbReference type="GO" id="GO:0005829">
    <property type="term" value="C:cytosol"/>
    <property type="evidence" value="ECO:0007669"/>
    <property type="project" value="TreeGrafter"/>
</dbReference>
<dbReference type="GO" id="GO:0005960">
    <property type="term" value="C:glycine cleavage complex"/>
    <property type="evidence" value="ECO:0007669"/>
    <property type="project" value="TreeGrafter"/>
</dbReference>
<dbReference type="GO" id="GO:0016594">
    <property type="term" value="F:glycine binding"/>
    <property type="evidence" value="ECO:0007669"/>
    <property type="project" value="TreeGrafter"/>
</dbReference>
<dbReference type="GO" id="GO:0004375">
    <property type="term" value="F:glycine dehydrogenase (decarboxylating) activity"/>
    <property type="evidence" value="ECO:0007669"/>
    <property type="project" value="UniProtKB-EC"/>
</dbReference>
<dbReference type="GO" id="GO:0030170">
    <property type="term" value="F:pyridoxal phosphate binding"/>
    <property type="evidence" value="ECO:0007669"/>
    <property type="project" value="TreeGrafter"/>
</dbReference>
<dbReference type="GO" id="GO:0019464">
    <property type="term" value="P:glycine decarboxylation via glycine cleavage system"/>
    <property type="evidence" value="ECO:0007669"/>
    <property type="project" value="UniProtKB-UniRule"/>
</dbReference>
<dbReference type="CDD" id="cd00613">
    <property type="entry name" value="GDC-P"/>
    <property type="match status" value="2"/>
</dbReference>
<dbReference type="FunFam" id="3.40.640.10:FF:000005">
    <property type="entry name" value="Glycine dehydrogenase (decarboxylating), mitochondrial"/>
    <property type="match status" value="1"/>
</dbReference>
<dbReference type="FunFam" id="3.90.1150.10:FF:000007">
    <property type="entry name" value="Glycine dehydrogenase (decarboxylating), mitochondrial"/>
    <property type="match status" value="1"/>
</dbReference>
<dbReference type="FunFam" id="3.40.640.10:FF:000007">
    <property type="entry name" value="glycine dehydrogenase (Decarboxylating), mitochondrial"/>
    <property type="match status" value="1"/>
</dbReference>
<dbReference type="Gene3D" id="3.90.1150.10">
    <property type="entry name" value="Aspartate Aminotransferase, domain 1"/>
    <property type="match status" value="2"/>
</dbReference>
<dbReference type="Gene3D" id="3.40.640.10">
    <property type="entry name" value="Type I PLP-dependent aspartate aminotransferase-like (Major domain)"/>
    <property type="match status" value="2"/>
</dbReference>
<dbReference type="HAMAP" id="MF_00711">
    <property type="entry name" value="GcvP"/>
    <property type="match status" value="1"/>
</dbReference>
<dbReference type="InterPro" id="IPR003437">
    <property type="entry name" value="GcvP"/>
</dbReference>
<dbReference type="InterPro" id="IPR049316">
    <property type="entry name" value="GDC-P_C"/>
</dbReference>
<dbReference type="InterPro" id="IPR049315">
    <property type="entry name" value="GDC-P_N"/>
</dbReference>
<dbReference type="InterPro" id="IPR020581">
    <property type="entry name" value="GDC_P"/>
</dbReference>
<dbReference type="InterPro" id="IPR015424">
    <property type="entry name" value="PyrdxlP-dep_Trfase"/>
</dbReference>
<dbReference type="InterPro" id="IPR015421">
    <property type="entry name" value="PyrdxlP-dep_Trfase_major"/>
</dbReference>
<dbReference type="InterPro" id="IPR015422">
    <property type="entry name" value="PyrdxlP-dep_Trfase_small"/>
</dbReference>
<dbReference type="NCBIfam" id="TIGR00461">
    <property type="entry name" value="gcvP"/>
    <property type="match status" value="1"/>
</dbReference>
<dbReference type="PANTHER" id="PTHR11773:SF13">
    <property type="entry name" value="GLYCINE DEHYDROGENASE (DECARBOXYLATING)"/>
    <property type="match status" value="1"/>
</dbReference>
<dbReference type="PANTHER" id="PTHR11773">
    <property type="entry name" value="GLYCINE DEHYDROGENASE, DECARBOXYLATING"/>
    <property type="match status" value="1"/>
</dbReference>
<dbReference type="Pfam" id="PF21478">
    <property type="entry name" value="GcvP2_C"/>
    <property type="match status" value="1"/>
</dbReference>
<dbReference type="Pfam" id="PF02347">
    <property type="entry name" value="GDC-P"/>
    <property type="match status" value="2"/>
</dbReference>
<dbReference type="SUPFAM" id="SSF53383">
    <property type="entry name" value="PLP-dependent transferases"/>
    <property type="match status" value="2"/>
</dbReference>
<sequence>MTTETLTQLEQHELFIRRHIGPESTQQQEMLNFVGAESLEDLTQQIVPGSIRLNRDLAVGSSCSEAEGMAYIREVADKNKVFKSYIGMGYYGTEVPSVIQRNVFENPGWYTAYTPYQPEIAQGRLEAILNFQQVSMDLTGLDLASASLLDEATAAAEAMALAKRVSKAKKANIFFIADDVFPQTIDVVKTRAECFGFDIVVGPASDAVNYELFGALFQYTNRFGEISDHTALFAELKAKKAVVTVAADMMSLVLLKSPGSMGADVVFGSAQRFGVPMGFGGPHAAFFVTRDEYKRSLPGRIIGVSQDTRGNRALRMAMQTREQHIRREKANSNICTAQVLLANMASFYAVYHGPQGLKVIAERIHRLTDILAAGLTAKGLELVNSTWFDTITVKGGDVAAINARALAAQINLRIDSANDNAGSFGISLDETTTRTDVSELFDVILGSEHGLDVAALDEQIIKADSASIPSELVRTDAILTHPTFNRYHSETEMMRYIKRLENKDLALNHSMISLGSCTMKLNAATEMMPVSWAEFGNMHPFCPLDQAEGYTQLIEELSAWLVDITGYDAMCMQANSGASGEYAGLLAIRNYHISRGEGHRNVCLIPQSAHGTNPASAQLAGMKIVVTACDKAGNVDMEDLKTKAAEVADNLSCIMITYPSTHGVYEETVSEICDIIHQHGGQVYLDGANMNAQVGLTTPGSIGADVSHLNLHKTFAIPHGGGGPGMGPIGVKAHLAPFVAGHSVVKPGRESDNNGAVSAAPYGSASILPITWMYIKLLGYQGLRQSTQVALLNANYVMKKLSAHYPVLYTGRNDRVAHECIIDLRPLKEASGVTEMDIAKRLNDYGFHAPTMSFPVAGTLMIEPTESESKVELDRFIEAMVSIRAEIAKVESGEWPVDNNPLHNAPHTLADIMDPAFDERPYTRQEAVFPTAAVKANKFWPTVNRIDDVYGDRNLMCSCAPVSDYE</sequence>
<organism>
    <name type="scientific">Shewanella halifaxensis (strain HAW-EB4)</name>
    <dbReference type="NCBI Taxonomy" id="458817"/>
    <lineage>
        <taxon>Bacteria</taxon>
        <taxon>Pseudomonadati</taxon>
        <taxon>Pseudomonadota</taxon>
        <taxon>Gammaproteobacteria</taxon>
        <taxon>Alteromonadales</taxon>
        <taxon>Shewanellaceae</taxon>
        <taxon>Shewanella</taxon>
    </lineage>
</organism>
<keyword id="KW-0560">Oxidoreductase</keyword>
<keyword id="KW-0663">Pyridoxal phosphate</keyword>
<name>GCSP_SHEHH</name>